<reference key="1">
    <citation type="journal article" date="2008" name="J. Biotechnol.">
        <title>The genome of Xanthomonas campestris pv. campestris B100 and its use for the reconstruction of metabolic pathways involved in xanthan biosynthesis.</title>
        <authorList>
            <person name="Vorhoelter F.-J."/>
            <person name="Schneiker S."/>
            <person name="Goesmann A."/>
            <person name="Krause L."/>
            <person name="Bekel T."/>
            <person name="Kaiser O."/>
            <person name="Linke B."/>
            <person name="Patschkowski T."/>
            <person name="Rueckert C."/>
            <person name="Schmid J."/>
            <person name="Sidhu V.K."/>
            <person name="Sieber V."/>
            <person name="Tauch A."/>
            <person name="Watt S.A."/>
            <person name="Weisshaar B."/>
            <person name="Becker A."/>
            <person name="Niehaus K."/>
            <person name="Puehler A."/>
        </authorList>
    </citation>
    <scope>NUCLEOTIDE SEQUENCE [LARGE SCALE GENOMIC DNA]</scope>
    <source>
        <strain>B100</strain>
    </source>
</reference>
<evidence type="ECO:0000255" key="1">
    <source>
        <dbReference type="HAMAP-Rule" id="MF_01852"/>
    </source>
</evidence>
<evidence type="ECO:0000305" key="2"/>
<name>TSAC_XANCB</name>
<sequence>MPHTPDLDAAVATLARGGVIAYPTEAVWGLGCDPRQEDAVLRLLEIKRRPVDKGVIVVASGLDVLQDWIDIAALGSEQLTAVLAQWPGPHTWILPVTAQAPRWVTGDHDGLAVRISAHPVVAALCKAWGAPLVSTSANLAGEPPARSRAALDPALLARIDGVLDGEVGGLAQPTPIRDARTGQILRD</sequence>
<gene>
    <name evidence="1" type="primary">tsaC</name>
    <name type="synonym">rimN</name>
    <name type="ordered locus">xcc-b100_3937</name>
</gene>
<proteinExistence type="inferred from homology"/>
<protein>
    <recommendedName>
        <fullName evidence="1">Threonylcarbamoyl-AMP synthase</fullName>
        <shortName evidence="1">TC-AMP synthase</shortName>
        <ecNumber evidence="1">2.7.7.87</ecNumber>
    </recommendedName>
    <alternativeName>
        <fullName evidence="1">L-threonylcarbamoyladenylate synthase</fullName>
    </alternativeName>
    <alternativeName>
        <fullName evidence="1">t(6)A37 threonylcarbamoyladenosine biosynthesis protein TsaC</fullName>
    </alternativeName>
    <alternativeName>
        <fullName evidence="1">tRNA threonylcarbamoyladenosine biosynthesis protein TsaC</fullName>
    </alternativeName>
</protein>
<dbReference type="EC" id="2.7.7.87" evidence="1"/>
<dbReference type="EMBL" id="AM920689">
    <property type="protein sequence ID" value="CAP53304.1"/>
    <property type="status" value="ALT_INIT"/>
    <property type="molecule type" value="Genomic_DNA"/>
</dbReference>
<dbReference type="SMR" id="B0RWR5"/>
<dbReference type="KEGG" id="xca:xcc-b100_3937"/>
<dbReference type="HOGENOM" id="CLU_031397_6_0_6"/>
<dbReference type="Proteomes" id="UP000001188">
    <property type="component" value="Chromosome"/>
</dbReference>
<dbReference type="GO" id="GO:0005737">
    <property type="term" value="C:cytoplasm"/>
    <property type="evidence" value="ECO:0007669"/>
    <property type="project" value="UniProtKB-SubCell"/>
</dbReference>
<dbReference type="GO" id="GO:0005524">
    <property type="term" value="F:ATP binding"/>
    <property type="evidence" value="ECO:0007669"/>
    <property type="project" value="UniProtKB-UniRule"/>
</dbReference>
<dbReference type="GO" id="GO:0003725">
    <property type="term" value="F:double-stranded RNA binding"/>
    <property type="evidence" value="ECO:0007669"/>
    <property type="project" value="InterPro"/>
</dbReference>
<dbReference type="GO" id="GO:0061710">
    <property type="term" value="F:L-threonylcarbamoyladenylate synthase"/>
    <property type="evidence" value="ECO:0007669"/>
    <property type="project" value="UniProtKB-EC"/>
</dbReference>
<dbReference type="GO" id="GO:0000049">
    <property type="term" value="F:tRNA binding"/>
    <property type="evidence" value="ECO:0007669"/>
    <property type="project" value="TreeGrafter"/>
</dbReference>
<dbReference type="GO" id="GO:0006450">
    <property type="term" value="P:regulation of translational fidelity"/>
    <property type="evidence" value="ECO:0007669"/>
    <property type="project" value="TreeGrafter"/>
</dbReference>
<dbReference type="GO" id="GO:0002949">
    <property type="term" value="P:tRNA threonylcarbamoyladenosine modification"/>
    <property type="evidence" value="ECO:0007669"/>
    <property type="project" value="UniProtKB-UniRule"/>
</dbReference>
<dbReference type="FunFam" id="3.90.870.10:FF:000004">
    <property type="entry name" value="Threonylcarbamoyl-AMP synthase"/>
    <property type="match status" value="1"/>
</dbReference>
<dbReference type="Gene3D" id="3.90.870.10">
    <property type="entry name" value="DHBP synthase"/>
    <property type="match status" value="1"/>
</dbReference>
<dbReference type="HAMAP" id="MF_01852">
    <property type="entry name" value="TsaC"/>
    <property type="match status" value="1"/>
</dbReference>
<dbReference type="InterPro" id="IPR017945">
    <property type="entry name" value="DHBP_synth_RibB-like_a/b_dom"/>
</dbReference>
<dbReference type="InterPro" id="IPR006070">
    <property type="entry name" value="Sua5-like_dom"/>
</dbReference>
<dbReference type="InterPro" id="IPR023535">
    <property type="entry name" value="TC-AMP_synthase"/>
</dbReference>
<dbReference type="InterPro" id="IPR050156">
    <property type="entry name" value="TC-AMP_synthase_SUA5"/>
</dbReference>
<dbReference type="PANTHER" id="PTHR17490">
    <property type="entry name" value="SUA5"/>
    <property type="match status" value="1"/>
</dbReference>
<dbReference type="PANTHER" id="PTHR17490:SF18">
    <property type="entry name" value="THREONYLCARBAMOYL-AMP SYNTHASE"/>
    <property type="match status" value="1"/>
</dbReference>
<dbReference type="Pfam" id="PF01300">
    <property type="entry name" value="Sua5_yciO_yrdC"/>
    <property type="match status" value="1"/>
</dbReference>
<dbReference type="SUPFAM" id="SSF55821">
    <property type="entry name" value="YrdC/RibB"/>
    <property type="match status" value="1"/>
</dbReference>
<dbReference type="PROSITE" id="PS51163">
    <property type="entry name" value="YRDC"/>
    <property type="match status" value="1"/>
</dbReference>
<keyword id="KW-0067">ATP-binding</keyword>
<keyword id="KW-0963">Cytoplasm</keyword>
<keyword id="KW-0547">Nucleotide-binding</keyword>
<keyword id="KW-0548">Nucleotidyltransferase</keyword>
<keyword id="KW-0808">Transferase</keyword>
<keyword id="KW-0819">tRNA processing</keyword>
<feature type="chain" id="PRO_0000353012" description="Threonylcarbamoyl-AMP synthase">
    <location>
        <begin position="1"/>
        <end position="187"/>
    </location>
</feature>
<feature type="domain" description="YrdC-like" evidence="1">
    <location>
        <begin position="4"/>
        <end position="187"/>
    </location>
</feature>
<accession>B0RWR5</accession>
<comment type="function">
    <text evidence="1">Required for the formation of a threonylcarbamoyl group on adenosine at position 37 (t(6)A37) in tRNAs that read codons beginning with adenine. Catalyzes the conversion of L-threonine, HCO(3)(-)/CO(2) and ATP to give threonylcarbamoyl-AMP (TC-AMP) as the acyladenylate intermediate, with the release of diphosphate.</text>
</comment>
<comment type="catalytic activity">
    <reaction evidence="1">
        <text>L-threonine + hydrogencarbonate + ATP = L-threonylcarbamoyladenylate + diphosphate + H2O</text>
        <dbReference type="Rhea" id="RHEA:36407"/>
        <dbReference type="ChEBI" id="CHEBI:15377"/>
        <dbReference type="ChEBI" id="CHEBI:17544"/>
        <dbReference type="ChEBI" id="CHEBI:30616"/>
        <dbReference type="ChEBI" id="CHEBI:33019"/>
        <dbReference type="ChEBI" id="CHEBI:57926"/>
        <dbReference type="ChEBI" id="CHEBI:73682"/>
        <dbReference type="EC" id="2.7.7.87"/>
    </reaction>
</comment>
<comment type="subcellular location">
    <subcellularLocation>
        <location evidence="1">Cytoplasm</location>
    </subcellularLocation>
</comment>
<comment type="similarity">
    <text evidence="1">Belongs to the SUA5 family. TsaC subfamily.</text>
</comment>
<comment type="sequence caution" evidence="2">
    <conflict type="erroneous initiation">
        <sequence resource="EMBL-CDS" id="CAP53304"/>
    </conflict>
</comment>
<organism>
    <name type="scientific">Xanthomonas campestris pv. campestris (strain B100)</name>
    <dbReference type="NCBI Taxonomy" id="509169"/>
    <lineage>
        <taxon>Bacteria</taxon>
        <taxon>Pseudomonadati</taxon>
        <taxon>Pseudomonadota</taxon>
        <taxon>Gammaproteobacteria</taxon>
        <taxon>Lysobacterales</taxon>
        <taxon>Lysobacteraceae</taxon>
        <taxon>Xanthomonas</taxon>
    </lineage>
</organism>